<name>TOP2_ASFM2</name>
<feature type="chain" id="PRO_0000145389" description="DNA topoisomerase 2">
    <location>
        <begin position="1"/>
        <end position="1191"/>
    </location>
</feature>
<feature type="domain" description="Topo IIA-type catalytic" evidence="4">
    <location>
        <begin position="706"/>
        <end position="1173"/>
    </location>
</feature>
<feature type="active site" description="O-(5'-phospho-DNA)-tyrosine intermediate" evidence="4">
    <location>
        <position position="799"/>
    </location>
</feature>
<feature type="binding site" evidence="1">
    <location>
        <position position="64"/>
    </location>
    <ligand>
        <name>ATP</name>
        <dbReference type="ChEBI" id="CHEBI:30616"/>
    </ligand>
</feature>
<feature type="binding site" evidence="1">
    <location>
        <position position="95"/>
    </location>
    <ligand>
        <name>ATP</name>
        <dbReference type="ChEBI" id="CHEBI:30616"/>
    </ligand>
</feature>
<feature type="binding site" evidence="3">
    <location>
        <begin position="142"/>
        <end position="149"/>
    </location>
    <ligand>
        <name>ATP</name>
        <dbReference type="ChEBI" id="CHEBI:30616"/>
    </ligand>
</feature>
<feature type="binding site" evidence="2">
    <location>
        <position position="437"/>
    </location>
    <ligand>
        <name>Mg(2+)</name>
        <dbReference type="ChEBI" id="CHEBI:18420"/>
        <label>1</label>
        <note>catalytic</note>
    </ligand>
</feature>
<feature type="binding site" evidence="2">
    <location>
        <position position="538"/>
    </location>
    <ligand>
        <name>Mg(2+)</name>
        <dbReference type="ChEBI" id="CHEBI:18420"/>
        <label>1</label>
        <note>catalytic</note>
    </ligand>
</feature>
<feature type="binding site" evidence="2">
    <location>
        <position position="538"/>
    </location>
    <ligand>
        <name>Mg(2+)</name>
        <dbReference type="ChEBI" id="CHEBI:18420"/>
        <label>2</label>
    </ligand>
</feature>
<feature type="binding site" evidence="2">
    <location>
        <position position="540"/>
    </location>
    <ligand>
        <name>Mg(2+)</name>
        <dbReference type="ChEBI" id="CHEBI:18420"/>
        <label>2</label>
    </ligand>
</feature>
<feature type="site" description="Transition state stabilizer" evidence="1">
    <location>
        <position position="798"/>
    </location>
</feature>
<feature type="sequence conflict" description="In Ref. 3; AY261361." evidence="5" ref="3">
    <original>A</original>
    <variation>AR</variation>
    <location>
        <position position="421"/>
    </location>
</feature>
<feature type="sequence conflict" description="In Ref. 3; AY261361." evidence="5" ref="3">
    <original>V</original>
    <variation>L</variation>
    <location>
        <position position="445"/>
    </location>
</feature>
<feature type="sequence conflict" description="In Ref. 3; AY261361." evidence="5" ref="3">
    <original>DV</original>
    <variation>EL</variation>
    <location>
        <begin position="1040"/>
        <end position="1041"/>
    </location>
</feature>
<dbReference type="EC" id="5.6.2.2" evidence="4"/>
<dbReference type="EMBL" id="Z14245">
    <property type="protein sequence ID" value="CAA78614.1"/>
    <property type="molecule type" value="Genomic_DNA"/>
</dbReference>
<dbReference type="EMBL" id="X71982">
    <property type="protein sequence ID" value="CAA50820.1"/>
    <property type="molecule type" value="Genomic_DNA"/>
</dbReference>
<dbReference type="EMBL" id="AY261361">
    <property type="status" value="NOT_ANNOTATED_CDS"/>
    <property type="molecule type" value="Genomic_DNA"/>
</dbReference>
<dbReference type="PIR" id="S27329">
    <property type="entry name" value="S27329"/>
</dbReference>
<dbReference type="SMR" id="P34203"/>
<dbReference type="Proteomes" id="UP000000860">
    <property type="component" value="Segment"/>
</dbReference>
<dbReference type="GO" id="GO:0030430">
    <property type="term" value="C:host cell cytoplasm"/>
    <property type="evidence" value="ECO:0007669"/>
    <property type="project" value="UniProtKB-SubCell"/>
</dbReference>
<dbReference type="GO" id="GO:0005524">
    <property type="term" value="F:ATP binding"/>
    <property type="evidence" value="ECO:0007669"/>
    <property type="project" value="UniProtKB-KW"/>
</dbReference>
<dbReference type="GO" id="GO:0003677">
    <property type="term" value="F:DNA binding"/>
    <property type="evidence" value="ECO:0007669"/>
    <property type="project" value="UniProtKB-KW"/>
</dbReference>
<dbReference type="GO" id="GO:0003918">
    <property type="term" value="F:DNA topoisomerase type II (double strand cut, ATP-hydrolyzing) activity"/>
    <property type="evidence" value="ECO:0007669"/>
    <property type="project" value="UniProtKB-EC"/>
</dbReference>
<dbReference type="GO" id="GO:0046872">
    <property type="term" value="F:metal ion binding"/>
    <property type="evidence" value="ECO:0007669"/>
    <property type="project" value="UniProtKB-KW"/>
</dbReference>
<dbReference type="GO" id="GO:0006265">
    <property type="term" value="P:DNA topological change"/>
    <property type="evidence" value="ECO:0007669"/>
    <property type="project" value="InterPro"/>
</dbReference>
<dbReference type="GO" id="GO:0000819">
    <property type="term" value="P:sister chromatid segregation"/>
    <property type="evidence" value="ECO:0007669"/>
    <property type="project" value="TreeGrafter"/>
</dbReference>
<dbReference type="FunFam" id="3.40.50.670:FF:000001">
    <property type="entry name" value="DNA topoisomerase 2"/>
    <property type="match status" value="1"/>
</dbReference>
<dbReference type="Gene3D" id="3.30.1360.40">
    <property type="match status" value="1"/>
</dbReference>
<dbReference type="Gene3D" id="3.30.1490.30">
    <property type="match status" value="1"/>
</dbReference>
<dbReference type="Gene3D" id="3.30.230.10">
    <property type="match status" value="1"/>
</dbReference>
<dbReference type="Gene3D" id="3.40.50.670">
    <property type="match status" value="1"/>
</dbReference>
<dbReference type="Gene3D" id="3.30.565.10">
    <property type="entry name" value="Histidine kinase-like ATPase, C-terminal domain"/>
    <property type="match status" value="1"/>
</dbReference>
<dbReference type="Gene3D" id="3.90.199.10">
    <property type="entry name" value="Topoisomerase II, domain 5"/>
    <property type="match status" value="1"/>
</dbReference>
<dbReference type="Gene3D" id="1.10.268.10">
    <property type="entry name" value="Topoisomerase, domain 3"/>
    <property type="match status" value="1"/>
</dbReference>
<dbReference type="InterPro" id="IPR050634">
    <property type="entry name" value="DNA_Topoisomerase_II"/>
</dbReference>
<dbReference type="InterPro" id="IPR036890">
    <property type="entry name" value="HATPase_C_sf"/>
</dbReference>
<dbReference type="InterPro" id="IPR014721">
    <property type="entry name" value="Ribsml_uS5_D2-typ_fold_subgr"/>
</dbReference>
<dbReference type="InterPro" id="IPR001241">
    <property type="entry name" value="Topo_IIA"/>
</dbReference>
<dbReference type="InterPro" id="IPR013760">
    <property type="entry name" value="Topo_IIA-like_dom_sf"/>
</dbReference>
<dbReference type="InterPro" id="IPR013758">
    <property type="entry name" value="Topo_IIA_A/C_ab"/>
</dbReference>
<dbReference type="InterPro" id="IPR013757">
    <property type="entry name" value="Topo_IIA_A_a_sf"/>
</dbReference>
<dbReference type="InterPro" id="IPR013759">
    <property type="entry name" value="Topo_IIA_B_C"/>
</dbReference>
<dbReference type="InterPro" id="IPR002205">
    <property type="entry name" value="Topo_IIA_dom_A"/>
</dbReference>
<dbReference type="InterPro" id="IPR001154">
    <property type="entry name" value="TopoII_euk"/>
</dbReference>
<dbReference type="InterPro" id="IPR018522">
    <property type="entry name" value="TopoIIA_CS"/>
</dbReference>
<dbReference type="InterPro" id="IPR031660">
    <property type="entry name" value="TOPRIM_C"/>
</dbReference>
<dbReference type="PANTHER" id="PTHR10169:SF38">
    <property type="entry name" value="DNA TOPOISOMERASE 2"/>
    <property type="match status" value="1"/>
</dbReference>
<dbReference type="PANTHER" id="PTHR10169">
    <property type="entry name" value="DNA TOPOISOMERASE/GYRASE"/>
    <property type="match status" value="1"/>
</dbReference>
<dbReference type="Pfam" id="PF00521">
    <property type="entry name" value="DNA_topoisoIV"/>
    <property type="match status" value="1"/>
</dbReference>
<dbReference type="Pfam" id="PF16898">
    <property type="entry name" value="TOPRIM_C"/>
    <property type="match status" value="1"/>
</dbReference>
<dbReference type="PRINTS" id="PR01158">
    <property type="entry name" value="TOPISMRASEII"/>
</dbReference>
<dbReference type="PRINTS" id="PR00418">
    <property type="entry name" value="TPI2FAMILY"/>
</dbReference>
<dbReference type="SMART" id="SM00433">
    <property type="entry name" value="TOP2c"/>
    <property type="match status" value="1"/>
</dbReference>
<dbReference type="SMART" id="SM00434">
    <property type="entry name" value="TOP4c"/>
    <property type="match status" value="1"/>
</dbReference>
<dbReference type="SUPFAM" id="SSF55874">
    <property type="entry name" value="ATPase domain of HSP90 chaperone/DNA topoisomerase II/histidine kinase"/>
    <property type="match status" value="1"/>
</dbReference>
<dbReference type="SUPFAM" id="SSF56719">
    <property type="entry name" value="Type II DNA topoisomerase"/>
    <property type="match status" value="1"/>
</dbReference>
<dbReference type="PROSITE" id="PS52040">
    <property type="entry name" value="TOPO_IIA"/>
    <property type="match status" value="1"/>
</dbReference>
<dbReference type="PROSITE" id="PS00177">
    <property type="entry name" value="TOPOISOMERASE_II"/>
    <property type="match status" value="1"/>
</dbReference>
<gene>
    <name type="ordered locus">Mal-120</name>
    <name type="ORF">i7R</name>
</gene>
<reference key="1">
    <citation type="journal article" date="1992" name="J. Mol. Biol.">
        <title>African swine fever virus encodes a gene with extensive homology to type II DNA topoisomerases.</title>
        <authorList>
            <person name="Baylis S.A."/>
            <person name="Dixon L.K."/>
            <person name="Vydelingum S."/>
            <person name="Smith G.L."/>
        </authorList>
    </citation>
    <scope>NUCLEOTIDE SEQUENCE [GENOMIC DNA]</scope>
</reference>
<reference key="2">
    <citation type="journal article" date="1994" name="J. Gen. Virol.">
        <title>Nucleotide sequence of a 55 kbp region from the right end of the genome of a pathogenic African swine fever virus isolate (Malawi LIL20/1).</title>
        <authorList>
            <person name="Dixon L.K."/>
            <person name="Twigg S.R.F."/>
            <person name="Baylis S.A."/>
            <person name="Vydelingum S."/>
            <person name="Bristow C."/>
            <person name="Hammond J.M."/>
            <person name="Smith G.L."/>
        </authorList>
    </citation>
    <scope>NUCLEOTIDE SEQUENCE [GENOMIC DNA]</scope>
</reference>
<reference key="3">
    <citation type="submission" date="2003-03" db="EMBL/GenBank/DDBJ databases">
        <title>African swine fever virus genomes.</title>
        <authorList>
            <person name="Kutish G.F."/>
            <person name="Rock D.L."/>
        </authorList>
    </citation>
    <scope>NUCLEOTIDE SEQUENCE [LARGE SCALE GENOMIC DNA]</scope>
</reference>
<organismHost>
    <name type="scientific">Ornithodoros</name>
    <name type="common">relapsing fever ticks</name>
    <dbReference type="NCBI Taxonomy" id="6937"/>
</organismHost>
<organismHost>
    <name type="scientific">Phacochoerus aethiopicus</name>
    <name type="common">Warthog</name>
    <dbReference type="NCBI Taxonomy" id="85517"/>
</organismHost>
<organismHost>
    <name type="scientific">Phacochoerus africanus</name>
    <name type="common">Warthog</name>
    <dbReference type="NCBI Taxonomy" id="41426"/>
</organismHost>
<organismHost>
    <name type="scientific">Potamochoerus larvatus</name>
    <name type="common">Bushpig</name>
    <dbReference type="NCBI Taxonomy" id="273792"/>
</organismHost>
<organismHost>
    <name type="scientific">Sus scrofa</name>
    <name type="common">Pig</name>
    <dbReference type="NCBI Taxonomy" id="9823"/>
</organismHost>
<evidence type="ECO:0000250" key="1"/>
<evidence type="ECO:0000250" key="2">
    <source>
        <dbReference type="UniProtKB" id="P11388"/>
    </source>
</evidence>
<evidence type="ECO:0000250" key="3">
    <source>
        <dbReference type="UniProtKB" id="Q00942"/>
    </source>
</evidence>
<evidence type="ECO:0000255" key="4">
    <source>
        <dbReference type="PROSITE-ProRule" id="PRU01384"/>
    </source>
</evidence>
<evidence type="ECO:0000305" key="5"/>
<proteinExistence type="inferred from homology"/>
<organism>
    <name type="scientific">African swine fever virus (isolate Tick/Malawi/Lil 20-1/1983)</name>
    <name type="common">ASFV</name>
    <dbReference type="NCBI Taxonomy" id="10500"/>
    <lineage>
        <taxon>Viruses</taxon>
        <taxon>Varidnaviria</taxon>
        <taxon>Bamfordvirae</taxon>
        <taxon>Nucleocytoviricota</taxon>
        <taxon>Pokkesviricetes</taxon>
        <taxon>Asfuvirales</taxon>
        <taxon>Asfarviridae</taxon>
        <taxon>Asfivirus</taxon>
        <taxon>African swine fever virus</taxon>
    </lineage>
</organism>
<keyword id="KW-0067">ATP-binding</keyword>
<keyword id="KW-0238">DNA-binding</keyword>
<keyword id="KW-0244">Early protein</keyword>
<keyword id="KW-1035">Host cytoplasm</keyword>
<keyword id="KW-0413">Isomerase</keyword>
<keyword id="KW-0460">Magnesium</keyword>
<keyword id="KW-0479">Metal-binding</keyword>
<keyword id="KW-0547">Nucleotide-binding</keyword>
<keyword id="KW-0799">Topoisomerase</keyword>
<accession>P34203</accession>
<sequence length="1191" mass="135071">MEAFEISDFKEHAKKKSMWAGALNKVTISGLMGVFTEDEDLMALPIHRDHCPALLKIFDELIVNATDHERACHSKTKKVTYIKISFDKGVFACENDGPGIPIAKHEQASLIAKRDVYVPEVASCHFLAGTNINKAKDCIKGGTNGVGLKLAMVHSQWAILTTADGAQKYVQHINQRLDIIEPPTITPSREMFTRIELMPVYQELGYAQPLSETEQADLSAWIYLRACQCAAYVGKGTTIYYNDKPCNTGSVMALAKMYTLLSAPNSTIHTTAIKADAKPYSLHPLQVAAVVSPKFKKFEHVSIINGVNCVKGEHVTFLKKTINEMVVKKFQQTIKDKNRKTTLRDSCSNIFVVIVGSIPGIEWTGQRKDELSIAENVFKTHYSIPSSFLTNMTRSIVDILLQSISKKDNHKQVDVDKYTRANAGGKKAQDCMLLAAEGDSALSLVRAGLTLGKSNPSGPSFDFCGMISLGGVIMNACKKVTNITTDSGETIMVRNEQLTNNKVLQGIVQVLGLDFNCHYKTQEERAKLRYGCIVACVDQDLDGCGKILGLLLAYFHLFWPQLIIHGFVKRLLTPLIRVYEKGKTVPVEFYYEQEFDAWAKKQTSLANHTVKYYKGLAAHDTHEVKSMFKHFDNMVYTFTLDDSAKELFHIYFGGESELRKRELCTGVVPLTETQTQSIHSDRQIPCSLHLQVDTKAYKLDAIERQIPNFLDGMTRARRKILAGGLKCFASNNRERKVFQFGGYVADHMFYHHGDMSLNTSIIKAAQYYPGSSHLYPVFIGIGSFGSRHLGGKDAGSPRYISVQLASEFIKTMFPAEDSWLLPYVFEDGQRAEPEYYVPVLPLAIMEYGANPSEGWKYTTWARQLEDILALVRAYVDKNNPKHELLHYAIERKITVLPLRPSNYNFKGHLKRFGQYYYSYGTYVVSEQRNIITITELPLRVPTVAYIESIKKSSNRMAFIEEIIDYSSSETIEILVKLKPNSLNRIVEEFKETEEQDSIENFLRLRNCLHSHLNFVKPKGGIIEFNSYYEILYAWLPYRRDVYQKRLMRERAVLKLRIIMETAIVRYINESADLNLSHYEDEKEASRILSEHGFPPLNQSLITSPEFASIEELNQKALQGCYTYILSLQARELLIAAKTRRVEKIKKMQARLDKVEQLLQESPFPGASVWLEEIDAVEKAIIKGRSTQWKFH</sequence>
<protein>
    <recommendedName>
        <fullName evidence="3">DNA topoisomerase 2</fullName>
        <ecNumber evidence="4">5.6.2.2</ecNumber>
    </recommendedName>
    <alternativeName>
        <fullName>DNA topoisomerase II</fullName>
    </alternativeName>
</protein>
<comment type="function">
    <text evidence="3">Type II topoisomerase. Processively relaxes supercoiled DNA. Displays DNA-supercoiling activity only when associated with the viral histone-like protein.</text>
</comment>
<comment type="catalytic activity">
    <reaction evidence="4">
        <text>ATP-dependent breakage, passage and rejoining of double-stranded DNA.</text>
        <dbReference type="EC" id="5.6.2.2"/>
    </reaction>
</comment>
<comment type="cofactor">
    <cofactor evidence="2">
        <name>Mg(2+)</name>
        <dbReference type="ChEBI" id="CHEBI:18420"/>
    </cofactor>
    <cofactor evidence="2">
        <name>Mn(2+)</name>
        <dbReference type="ChEBI" id="CHEBI:29035"/>
    </cofactor>
    <cofactor evidence="2">
        <name>Ca(2+)</name>
        <dbReference type="ChEBI" id="CHEBI:29108"/>
    </cofactor>
    <text evidence="2">Binds two Mg(2+) per subunit. The magnesium ions form salt bridges with both the protein and the DNA. Can also accept other divalent metal cations, such as Mn(2+) or Ca(2+).</text>
</comment>
<comment type="subcellular location">
    <subcellularLocation>
        <location evidence="3">Host cytoplasm</location>
    </subcellularLocation>
    <text evidence="3">Localizes to the cytoplasmic viral factories.</text>
</comment>
<comment type="induction">
    <text evidence="5">Expressed in the early phase of the viral replicative cycle.</text>
</comment>
<comment type="similarity">
    <text evidence="5">Belongs to the type II topoisomerase family.</text>
</comment>